<feature type="chain" id="PRO_0000192486" description="UPF0125 protein CBU_1303">
    <location>
        <begin position="1"/>
        <end position="101"/>
    </location>
</feature>
<reference key="1">
    <citation type="journal article" date="2003" name="Proc. Natl. Acad. Sci. U.S.A.">
        <title>Complete genome sequence of the Q-fever pathogen, Coxiella burnetii.</title>
        <authorList>
            <person name="Seshadri R."/>
            <person name="Paulsen I.T."/>
            <person name="Eisen J.A."/>
            <person name="Read T.D."/>
            <person name="Nelson K.E."/>
            <person name="Nelson W.C."/>
            <person name="Ward N.L."/>
            <person name="Tettelin H."/>
            <person name="Davidsen T.M."/>
            <person name="Beanan M.J."/>
            <person name="DeBoy R.T."/>
            <person name="Daugherty S.C."/>
            <person name="Brinkac L.M."/>
            <person name="Madupu R."/>
            <person name="Dodson R.J."/>
            <person name="Khouri H.M."/>
            <person name="Lee K.H."/>
            <person name="Carty H.A."/>
            <person name="Scanlan D."/>
            <person name="Heinzen R.A."/>
            <person name="Thompson H.A."/>
            <person name="Samuel J.E."/>
            <person name="Fraser C.M."/>
            <person name="Heidelberg J.F."/>
        </authorList>
    </citation>
    <scope>NUCLEOTIDE SEQUENCE [LARGE SCALE GENOMIC DNA]</scope>
    <source>
        <strain>RSA 493 / Nine Mile phase I</strain>
    </source>
</reference>
<keyword id="KW-1185">Reference proteome</keyword>
<dbReference type="EMBL" id="AE016828">
    <property type="protein sequence ID" value="AAO90809.1"/>
    <property type="molecule type" value="Genomic_DNA"/>
</dbReference>
<dbReference type="RefSeq" id="NP_820295.1">
    <property type="nucleotide sequence ID" value="NC_002971.4"/>
</dbReference>
<dbReference type="RefSeq" id="WP_005773020.1">
    <property type="nucleotide sequence ID" value="NZ_CCYB01000029.1"/>
</dbReference>
<dbReference type="SMR" id="Q83C31"/>
<dbReference type="STRING" id="227377.CBU_1303"/>
<dbReference type="EnsemblBacteria" id="AAO90809">
    <property type="protein sequence ID" value="AAO90809"/>
    <property type="gene ID" value="CBU_1303"/>
</dbReference>
<dbReference type="GeneID" id="1209208"/>
<dbReference type="KEGG" id="cbu:CBU_1303"/>
<dbReference type="PATRIC" id="fig|227377.7.peg.1297"/>
<dbReference type="eggNOG" id="COG2914">
    <property type="taxonomic scope" value="Bacteria"/>
</dbReference>
<dbReference type="HOGENOM" id="CLU_150721_1_0_6"/>
<dbReference type="OrthoDB" id="9796575at2"/>
<dbReference type="Proteomes" id="UP000002671">
    <property type="component" value="Chromosome"/>
</dbReference>
<dbReference type="Gene3D" id="3.10.20.280">
    <property type="entry name" value="RnfH-like"/>
    <property type="match status" value="1"/>
</dbReference>
<dbReference type="HAMAP" id="MF_00460">
    <property type="entry name" value="UPF0125_RnfH"/>
    <property type="match status" value="1"/>
</dbReference>
<dbReference type="InterPro" id="IPR016155">
    <property type="entry name" value="Mopterin_synth/thiamin_S_b"/>
</dbReference>
<dbReference type="InterPro" id="IPR005346">
    <property type="entry name" value="RnfH"/>
</dbReference>
<dbReference type="InterPro" id="IPR037021">
    <property type="entry name" value="RnfH_sf"/>
</dbReference>
<dbReference type="NCBIfam" id="NF002490">
    <property type="entry name" value="PRK01777.1"/>
    <property type="match status" value="1"/>
</dbReference>
<dbReference type="PANTHER" id="PTHR37483">
    <property type="entry name" value="UPF0125 PROTEIN RATB"/>
    <property type="match status" value="1"/>
</dbReference>
<dbReference type="PANTHER" id="PTHR37483:SF1">
    <property type="entry name" value="UPF0125 PROTEIN RATB"/>
    <property type="match status" value="1"/>
</dbReference>
<dbReference type="Pfam" id="PF03658">
    <property type="entry name" value="Ub-RnfH"/>
    <property type="match status" value="1"/>
</dbReference>
<dbReference type="SUPFAM" id="SSF54285">
    <property type="entry name" value="MoaD/ThiS"/>
    <property type="match status" value="1"/>
</dbReference>
<proteinExistence type="inferred from homology"/>
<comment type="similarity">
    <text evidence="1">Belongs to the UPF0125 (RnfH) family.</text>
</comment>
<organism>
    <name type="scientific">Coxiella burnetii (strain RSA 493 / Nine Mile phase I)</name>
    <dbReference type="NCBI Taxonomy" id="227377"/>
    <lineage>
        <taxon>Bacteria</taxon>
        <taxon>Pseudomonadati</taxon>
        <taxon>Pseudomonadota</taxon>
        <taxon>Gammaproteobacteria</taxon>
        <taxon>Legionellales</taxon>
        <taxon>Coxiellaceae</taxon>
        <taxon>Coxiella</taxon>
    </lineage>
</organism>
<sequence length="101" mass="11294">MISIIIAYATPEKQVEIPLTVEESCTLVVAVKRSGILQQFPEINLSQAIVGIHNKRTALDAGLRDGDRIEIYRPLTMDPKQARLLRAKRGKIRRMVRGEAG</sequence>
<name>Y1303_COXBU</name>
<evidence type="ECO:0000255" key="1">
    <source>
        <dbReference type="HAMAP-Rule" id="MF_00460"/>
    </source>
</evidence>
<accession>Q83C31</accession>
<protein>
    <recommendedName>
        <fullName evidence="1">UPF0125 protein CBU_1303</fullName>
    </recommendedName>
</protein>
<gene>
    <name type="ordered locus">CBU_1303</name>
</gene>